<proteinExistence type="inferred from homology"/>
<sequence length="379" mass="40857">MSATLALTEQLIARASVTPDDQHCQQIMTERLAALGFECETIASHGVTNLWAVKRGTDGRDGKLLAFAGHTDVVPTGPLEQWTSPPFIPAHRDGKLYGRGAADMKTSLAAFVVASEEFVAAHPDHRGAIAFLITSDEEGPATDGTVKVVELLQARGERLDYCIVGEPTSTTELGDVVKNGRRGSMSGELVVKGVQGHIAYPHLAKNPIHLLAPALAELAAEQWDAGNEYFPPTTWQVSNLHAGTGATNVIPGHADLLFNFRFSTASTVEGLQARVHAILDKHGLEYTLKWSVSGLPFLTPRGELSGALEHAIRTETGITTELSTTGGTSDGRFIARICPQVIEFGPPNGSIHKIDEHIEVRFVDPLKNVYRRVLEQLIA</sequence>
<name>DAPE_BURCJ</name>
<comment type="function">
    <text evidence="1">Catalyzes the hydrolysis of N-succinyl-L,L-diaminopimelic acid (SDAP), forming succinate and LL-2,6-diaminopimelate (DAP), an intermediate involved in the bacterial biosynthesis of lysine and meso-diaminopimelic acid, an essential component of bacterial cell walls.</text>
</comment>
<comment type="catalytic activity">
    <reaction evidence="1">
        <text>N-succinyl-(2S,6S)-2,6-diaminopimelate + H2O = (2S,6S)-2,6-diaminopimelate + succinate</text>
        <dbReference type="Rhea" id="RHEA:22608"/>
        <dbReference type="ChEBI" id="CHEBI:15377"/>
        <dbReference type="ChEBI" id="CHEBI:30031"/>
        <dbReference type="ChEBI" id="CHEBI:57609"/>
        <dbReference type="ChEBI" id="CHEBI:58087"/>
        <dbReference type="EC" id="3.5.1.18"/>
    </reaction>
</comment>
<comment type="cofactor">
    <cofactor evidence="1">
        <name>Zn(2+)</name>
        <dbReference type="ChEBI" id="CHEBI:29105"/>
    </cofactor>
    <cofactor evidence="1">
        <name>Co(2+)</name>
        <dbReference type="ChEBI" id="CHEBI:48828"/>
    </cofactor>
    <text evidence="1">Binds 2 Zn(2+) or Co(2+) ions per subunit.</text>
</comment>
<comment type="pathway">
    <text evidence="1">Amino-acid biosynthesis; L-lysine biosynthesis via DAP pathway; LL-2,6-diaminopimelate from (S)-tetrahydrodipicolinate (succinylase route): step 3/3.</text>
</comment>
<comment type="subunit">
    <text evidence="1">Homodimer.</text>
</comment>
<comment type="similarity">
    <text evidence="1">Belongs to the peptidase M20A family. DapE subfamily.</text>
</comment>
<keyword id="KW-0028">Amino-acid biosynthesis</keyword>
<keyword id="KW-0170">Cobalt</keyword>
<keyword id="KW-0220">Diaminopimelate biosynthesis</keyword>
<keyword id="KW-0378">Hydrolase</keyword>
<keyword id="KW-0457">Lysine biosynthesis</keyword>
<keyword id="KW-0479">Metal-binding</keyword>
<keyword id="KW-0862">Zinc</keyword>
<gene>
    <name evidence="1" type="primary">dapE</name>
    <name type="ordered locus">BceJ2315_20650</name>
    <name type="ORF">BCAL2103</name>
</gene>
<protein>
    <recommendedName>
        <fullName evidence="1">Succinyl-diaminopimelate desuccinylase</fullName>
        <shortName evidence="1">SDAP desuccinylase</shortName>
        <ecNumber evidence="1">3.5.1.18</ecNumber>
    </recommendedName>
    <alternativeName>
        <fullName evidence="1">N-succinyl-LL-2,6-diaminoheptanedioate amidohydrolase</fullName>
    </alternativeName>
</protein>
<evidence type="ECO:0000255" key="1">
    <source>
        <dbReference type="HAMAP-Rule" id="MF_01690"/>
    </source>
</evidence>
<organism>
    <name type="scientific">Burkholderia cenocepacia (strain ATCC BAA-245 / DSM 16553 / LMG 16656 / NCTC 13227 / J2315 / CF5610)</name>
    <name type="common">Burkholderia cepacia (strain J2315)</name>
    <dbReference type="NCBI Taxonomy" id="216591"/>
    <lineage>
        <taxon>Bacteria</taxon>
        <taxon>Pseudomonadati</taxon>
        <taxon>Pseudomonadota</taxon>
        <taxon>Betaproteobacteria</taxon>
        <taxon>Burkholderiales</taxon>
        <taxon>Burkholderiaceae</taxon>
        <taxon>Burkholderia</taxon>
        <taxon>Burkholderia cepacia complex</taxon>
    </lineage>
</organism>
<feature type="chain" id="PRO_0000375500" description="Succinyl-diaminopimelate desuccinylase">
    <location>
        <begin position="1"/>
        <end position="379"/>
    </location>
</feature>
<feature type="active site" evidence="1">
    <location>
        <position position="72"/>
    </location>
</feature>
<feature type="active site" description="Proton acceptor" evidence="1">
    <location>
        <position position="137"/>
    </location>
</feature>
<feature type="binding site" evidence="1">
    <location>
        <position position="70"/>
    </location>
    <ligand>
        <name>Zn(2+)</name>
        <dbReference type="ChEBI" id="CHEBI:29105"/>
        <label>1</label>
    </ligand>
</feature>
<feature type="binding site" evidence="1">
    <location>
        <position position="103"/>
    </location>
    <ligand>
        <name>Zn(2+)</name>
        <dbReference type="ChEBI" id="CHEBI:29105"/>
        <label>1</label>
    </ligand>
</feature>
<feature type="binding site" evidence="1">
    <location>
        <position position="103"/>
    </location>
    <ligand>
        <name>Zn(2+)</name>
        <dbReference type="ChEBI" id="CHEBI:29105"/>
        <label>2</label>
    </ligand>
</feature>
<feature type="binding site" evidence="1">
    <location>
        <position position="138"/>
    </location>
    <ligand>
        <name>Zn(2+)</name>
        <dbReference type="ChEBI" id="CHEBI:29105"/>
        <label>2</label>
    </ligand>
</feature>
<feature type="binding site" evidence="1">
    <location>
        <position position="166"/>
    </location>
    <ligand>
        <name>Zn(2+)</name>
        <dbReference type="ChEBI" id="CHEBI:29105"/>
        <label>1</label>
    </ligand>
</feature>
<feature type="binding site" evidence="1">
    <location>
        <position position="352"/>
    </location>
    <ligand>
        <name>Zn(2+)</name>
        <dbReference type="ChEBI" id="CHEBI:29105"/>
        <label>2</label>
    </ligand>
</feature>
<accession>B4ECP3</accession>
<dbReference type="EC" id="3.5.1.18" evidence="1"/>
<dbReference type="EMBL" id="AM747720">
    <property type="protein sequence ID" value="CAR52403.1"/>
    <property type="molecule type" value="Genomic_DNA"/>
</dbReference>
<dbReference type="RefSeq" id="WP_006493370.1">
    <property type="nucleotide sequence ID" value="NC_011000.1"/>
</dbReference>
<dbReference type="SMR" id="B4ECP3"/>
<dbReference type="KEGG" id="bcj:BCAL2103"/>
<dbReference type="eggNOG" id="COG0624">
    <property type="taxonomic scope" value="Bacteria"/>
</dbReference>
<dbReference type="HOGENOM" id="CLU_021802_4_0_4"/>
<dbReference type="BioCyc" id="BCEN216591:G1G1V-2303-MONOMER"/>
<dbReference type="UniPathway" id="UPA00034">
    <property type="reaction ID" value="UER00021"/>
</dbReference>
<dbReference type="Proteomes" id="UP000001035">
    <property type="component" value="Chromosome 1"/>
</dbReference>
<dbReference type="GO" id="GO:0008777">
    <property type="term" value="F:acetylornithine deacetylase activity"/>
    <property type="evidence" value="ECO:0007669"/>
    <property type="project" value="TreeGrafter"/>
</dbReference>
<dbReference type="GO" id="GO:0050897">
    <property type="term" value="F:cobalt ion binding"/>
    <property type="evidence" value="ECO:0007669"/>
    <property type="project" value="UniProtKB-UniRule"/>
</dbReference>
<dbReference type="GO" id="GO:0009014">
    <property type="term" value="F:succinyl-diaminopimelate desuccinylase activity"/>
    <property type="evidence" value="ECO:0007669"/>
    <property type="project" value="UniProtKB-UniRule"/>
</dbReference>
<dbReference type="GO" id="GO:0008270">
    <property type="term" value="F:zinc ion binding"/>
    <property type="evidence" value="ECO:0007669"/>
    <property type="project" value="UniProtKB-UniRule"/>
</dbReference>
<dbReference type="GO" id="GO:0019877">
    <property type="term" value="P:diaminopimelate biosynthetic process"/>
    <property type="evidence" value="ECO:0007669"/>
    <property type="project" value="UniProtKB-UniRule"/>
</dbReference>
<dbReference type="GO" id="GO:0006526">
    <property type="term" value="P:L-arginine biosynthetic process"/>
    <property type="evidence" value="ECO:0007669"/>
    <property type="project" value="TreeGrafter"/>
</dbReference>
<dbReference type="GO" id="GO:0009089">
    <property type="term" value="P:lysine biosynthetic process via diaminopimelate"/>
    <property type="evidence" value="ECO:0007669"/>
    <property type="project" value="UniProtKB-UniRule"/>
</dbReference>
<dbReference type="CDD" id="cd03891">
    <property type="entry name" value="M20_DapE_proteobac"/>
    <property type="match status" value="1"/>
</dbReference>
<dbReference type="FunFam" id="3.30.70.360:FF:000011">
    <property type="entry name" value="Succinyl-diaminopimelate desuccinylase"/>
    <property type="match status" value="1"/>
</dbReference>
<dbReference type="FunFam" id="3.40.630.10:FF:000005">
    <property type="entry name" value="Succinyl-diaminopimelate desuccinylase"/>
    <property type="match status" value="1"/>
</dbReference>
<dbReference type="Gene3D" id="3.40.630.10">
    <property type="entry name" value="Zn peptidases"/>
    <property type="match status" value="2"/>
</dbReference>
<dbReference type="HAMAP" id="MF_01690">
    <property type="entry name" value="DapE"/>
    <property type="match status" value="1"/>
</dbReference>
<dbReference type="InterPro" id="IPR001261">
    <property type="entry name" value="ArgE/DapE_CS"/>
</dbReference>
<dbReference type="InterPro" id="IPR036264">
    <property type="entry name" value="Bact_exopeptidase_dim_dom"/>
</dbReference>
<dbReference type="InterPro" id="IPR005941">
    <property type="entry name" value="DapE_proteobac"/>
</dbReference>
<dbReference type="InterPro" id="IPR002933">
    <property type="entry name" value="Peptidase_M20"/>
</dbReference>
<dbReference type="InterPro" id="IPR011650">
    <property type="entry name" value="Peptidase_M20_dimer"/>
</dbReference>
<dbReference type="InterPro" id="IPR050072">
    <property type="entry name" value="Peptidase_M20A"/>
</dbReference>
<dbReference type="NCBIfam" id="TIGR01246">
    <property type="entry name" value="dapE_proteo"/>
    <property type="match status" value="1"/>
</dbReference>
<dbReference type="NCBIfam" id="NF009557">
    <property type="entry name" value="PRK13009.1"/>
    <property type="match status" value="1"/>
</dbReference>
<dbReference type="PANTHER" id="PTHR43808">
    <property type="entry name" value="ACETYLORNITHINE DEACETYLASE"/>
    <property type="match status" value="1"/>
</dbReference>
<dbReference type="PANTHER" id="PTHR43808:SF31">
    <property type="entry name" value="N-ACETYL-L-CITRULLINE DEACETYLASE"/>
    <property type="match status" value="1"/>
</dbReference>
<dbReference type="Pfam" id="PF07687">
    <property type="entry name" value="M20_dimer"/>
    <property type="match status" value="1"/>
</dbReference>
<dbReference type="Pfam" id="PF01546">
    <property type="entry name" value="Peptidase_M20"/>
    <property type="match status" value="1"/>
</dbReference>
<dbReference type="SUPFAM" id="SSF55031">
    <property type="entry name" value="Bacterial exopeptidase dimerisation domain"/>
    <property type="match status" value="1"/>
</dbReference>
<dbReference type="SUPFAM" id="SSF53187">
    <property type="entry name" value="Zn-dependent exopeptidases"/>
    <property type="match status" value="1"/>
</dbReference>
<dbReference type="PROSITE" id="PS00758">
    <property type="entry name" value="ARGE_DAPE_CPG2_1"/>
    <property type="match status" value="1"/>
</dbReference>
<reference key="1">
    <citation type="journal article" date="2009" name="J. Bacteriol.">
        <title>The genome of Burkholderia cenocepacia J2315, an epidemic pathogen of cystic fibrosis patients.</title>
        <authorList>
            <person name="Holden M.T."/>
            <person name="Seth-Smith H.M."/>
            <person name="Crossman L.C."/>
            <person name="Sebaihia M."/>
            <person name="Bentley S.D."/>
            <person name="Cerdeno-Tarraga A.M."/>
            <person name="Thomson N.R."/>
            <person name="Bason N."/>
            <person name="Quail M.A."/>
            <person name="Sharp S."/>
            <person name="Cherevach I."/>
            <person name="Churcher C."/>
            <person name="Goodhead I."/>
            <person name="Hauser H."/>
            <person name="Holroyd N."/>
            <person name="Mungall K."/>
            <person name="Scott P."/>
            <person name="Walker D."/>
            <person name="White B."/>
            <person name="Rose H."/>
            <person name="Iversen P."/>
            <person name="Mil-Homens D."/>
            <person name="Rocha E.P."/>
            <person name="Fialho A.M."/>
            <person name="Baldwin A."/>
            <person name="Dowson C."/>
            <person name="Barrell B.G."/>
            <person name="Govan J.R."/>
            <person name="Vandamme P."/>
            <person name="Hart C.A."/>
            <person name="Mahenthiralingam E."/>
            <person name="Parkhill J."/>
        </authorList>
    </citation>
    <scope>NUCLEOTIDE SEQUENCE [LARGE SCALE GENOMIC DNA]</scope>
    <source>
        <strain>ATCC BAA-245 / DSM 16553 / LMG 16656 / NCTC 13227 / J2315 / CF5610</strain>
    </source>
</reference>